<organism>
    <name type="scientific">Escherichia coli O127:H6 (strain E2348/69 / EPEC)</name>
    <dbReference type="NCBI Taxonomy" id="574521"/>
    <lineage>
        <taxon>Bacteria</taxon>
        <taxon>Pseudomonadati</taxon>
        <taxon>Pseudomonadota</taxon>
        <taxon>Gammaproteobacteria</taxon>
        <taxon>Enterobacterales</taxon>
        <taxon>Enterobacteriaceae</taxon>
        <taxon>Escherichia</taxon>
    </lineage>
</organism>
<accession>B7UHZ6</accession>
<gene>
    <name evidence="1" type="primary">yqgF</name>
    <name type="ordered locus">E2348C_3202</name>
</gene>
<dbReference type="EC" id="3.1.-.-" evidence="1"/>
<dbReference type="EMBL" id="FM180568">
    <property type="protein sequence ID" value="CAS10750.1"/>
    <property type="molecule type" value="Genomic_DNA"/>
</dbReference>
<dbReference type="SMR" id="B7UHZ6"/>
<dbReference type="KEGG" id="ecg:E2348C_3202"/>
<dbReference type="HOGENOM" id="CLU_098240_3_0_6"/>
<dbReference type="Proteomes" id="UP000008205">
    <property type="component" value="Chromosome"/>
</dbReference>
<dbReference type="GO" id="GO:0005829">
    <property type="term" value="C:cytosol"/>
    <property type="evidence" value="ECO:0007669"/>
    <property type="project" value="TreeGrafter"/>
</dbReference>
<dbReference type="GO" id="GO:0004518">
    <property type="term" value="F:nuclease activity"/>
    <property type="evidence" value="ECO:0007669"/>
    <property type="project" value="UniProtKB-KW"/>
</dbReference>
<dbReference type="GO" id="GO:0000967">
    <property type="term" value="P:rRNA 5'-end processing"/>
    <property type="evidence" value="ECO:0007669"/>
    <property type="project" value="UniProtKB-UniRule"/>
</dbReference>
<dbReference type="CDD" id="cd16964">
    <property type="entry name" value="YqgF"/>
    <property type="match status" value="1"/>
</dbReference>
<dbReference type="FunFam" id="3.30.420.140:FF:000002">
    <property type="entry name" value="Putative pre-16S rRNA nuclease"/>
    <property type="match status" value="1"/>
</dbReference>
<dbReference type="Gene3D" id="3.30.420.140">
    <property type="entry name" value="YqgF/RNase H-like domain"/>
    <property type="match status" value="1"/>
</dbReference>
<dbReference type="HAMAP" id="MF_00651">
    <property type="entry name" value="Nuclease_YqgF"/>
    <property type="match status" value="1"/>
</dbReference>
<dbReference type="InterPro" id="IPR012337">
    <property type="entry name" value="RNaseH-like_sf"/>
</dbReference>
<dbReference type="InterPro" id="IPR005227">
    <property type="entry name" value="YqgF"/>
</dbReference>
<dbReference type="InterPro" id="IPR006641">
    <property type="entry name" value="YqgF/RNaseH-like_dom"/>
</dbReference>
<dbReference type="InterPro" id="IPR037027">
    <property type="entry name" value="YqgF/RNaseH-like_dom_sf"/>
</dbReference>
<dbReference type="NCBIfam" id="TIGR00250">
    <property type="entry name" value="RNAse_H_YqgF"/>
    <property type="match status" value="1"/>
</dbReference>
<dbReference type="PANTHER" id="PTHR33317">
    <property type="entry name" value="POLYNUCLEOTIDYL TRANSFERASE, RIBONUCLEASE H-LIKE SUPERFAMILY PROTEIN"/>
    <property type="match status" value="1"/>
</dbReference>
<dbReference type="PANTHER" id="PTHR33317:SF4">
    <property type="entry name" value="POLYNUCLEOTIDYL TRANSFERASE, RIBONUCLEASE H-LIKE SUPERFAMILY PROTEIN"/>
    <property type="match status" value="1"/>
</dbReference>
<dbReference type="Pfam" id="PF03652">
    <property type="entry name" value="RuvX"/>
    <property type="match status" value="1"/>
</dbReference>
<dbReference type="SMART" id="SM00732">
    <property type="entry name" value="YqgFc"/>
    <property type="match status" value="1"/>
</dbReference>
<dbReference type="SUPFAM" id="SSF53098">
    <property type="entry name" value="Ribonuclease H-like"/>
    <property type="match status" value="1"/>
</dbReference>
<comment type="function">
    <text evidence="1">Could be a nuclease involved in processing of the 5'-end of pre-16S rRNA.</text>
</comment>
<comment type="subcellular location">
    <subcellularLocation>
        <location evidence="1">Cytoplasm</location>
    </subcellularLocation>
</comment>
<comment type="similarity">
    <text evidence="1">Belongs to the YqgF nuclease family.</text>
</comment>
<reference key="1">
    <citation type="journal article" date="2009" name="J. Bacteriol.">
        <title>Complete genome sequence and comparative genome analysis of enteropathogenic Escherichia coli O127:H6 strain E2348/69.</title>
        <authorList>
            <person name="Iguchi A."/>
            <person name="Thomson N.R."/>
            <person name="Ogura Y."/>
            <person name="Saunders D."/>
            <person name="Ooka T."/>
            <person name="Henderson I.R."/>
            <person name="Harris D."/>
            <person name="Asadulghani M."/>
            <person name="Kurokawa K."/>
            <person name="Dean P."/>
            <person name="Kenny B."/>
            <person name="Quail M.A."/>
            <person name="Thurston S."/>
            <person name="Dougan G."/>
            <person name="Hayashi T."/>
            <person name="Parkhill J."/>
            <person name="Frankel G."/>
        </authorList>
    </citation>
    <scope>NUCLEOTIDE SEQUENCE [LARGE SCALE GENOMIC DNA]</scope>
    <source>
        <strain>E2348/69 / EPEC</strain>
    </source>
</reference>
<protein>
    <recommendedName>
        <fullName evidence="1">Putative pre-16S rRNA nuclease</fullName>
        <ecNumber evidence="1">3.1.-.-</ecNumber>
    </recommendedName>
</protein>
<proteinExistence type="inferred from homology"/>
<evidence type="ECO:0000255" key="1">
    <source>
        <dbReference type="HAMAP-Rule" id="MF_00651"/>
    </source>
</evidence>
<sequence length="138" mass="15186">MSGTLLAFDFGTKSIGVAVGQRITGTARPLPAIKAQDGTPDWNLIERLLKEWQPDEIIVGLPLNMDGTEQPLTARARKFANRIHGRFGVEVKLHDERLSTVEARSGLFEQGGYRALNKGKVDSASAVIILESYFEQGY</sequence>
<name>YQGF_ECO27</name>
<feature type="chain" id="PRO_1000147479" description="Putative pre-16S rRNA nuclease">
    <location>
        <begin position="1"/>
        <end position="138"/>
    </location>
</feature>
<keyword id="KW-0963">Cytoplasm</keyword>
<keyword id="KW-0378">Hydrolase</keyword>
<keyword id="KW-0540">Nuclease</keyword>
<keyword id="KW-1185">Reference proteome</keyword>
<keyword id="KW-0690">Ribosome biogenesis</keyword>